<dbReference type="EMBL" id="X62666">
    <property type="protein sequence ID" value="CAA44535.1"/>
    <property type="molecule type" value="Genomic_DNA"/>
</dbReference>
<dbReference type="EMBL" id="M80792">
    <property type="protein sequence ID" value="AAA25946.1"/>
    <property type="molecule type" value="Genomic_DNA"/>
</dbReference>
<dbReference type="EMBL" id="AE004091">
    <property type="protein sequence ID" value="AAG06489.1"/>
    <property type="status" value="ALT_INIT"/>
    <property type="molecule type" value="Genomic_DNA"/>
</dbReference>
<dbReference type="PIR" id="E83258">
    <property type="entry name" value="E83258"/>
</dbReference>
<dbReference type="PIR" id="S25386">
    <property type="entry name" value="SKPSXT"/>
</dbReference>
<dbReference type="RefSeq" id="NP_251791.1">
    <property type="nucleotide sequence ID" value="NC_002516.2"/>
</dbReference>
<dbReference type="PDB" id="2KEP">
    <property type="method" value="NMR"/>
    <property type="chains" value="A=33-142"/>
</dbReference>
<dbReference type="PDBsum" id="2KEP"/>
<dbReference type="BMRB" id="Q00514"/>
<dbReference type="SMR" id="Q00514"/>
<dbReference type="FunCoup" id="Q00514">
    <property type="interactions" value="205"/>
</dbReference>
<dbReference type="IntAct" id="Q00514">
    <property type="interactions" value="1"/>
</dbReference>
<dbReference type="STRING" id="208964.PA3101"/>
<dbReference type="iPTMnet" id="Q00514"/>
<dbReference type="PaxDb" id="208964-PA3101"/>
<dbReference type="DNASU" id="878731"/>
<dbReference type="GeneID" id="878731"/>
<dbReference type="KEGG" id="pae:PA3101"/>
<dbReference type="PATRIC" id="fig|208964.12.peg.3253"/>
<dbReference type="PseudoCAP" id="PA3101"/>
<dbReference type="HOGENOM" id="CLU_091705_2_1_6"/>
<dbReference type="InParanoid" id="Q00514"/>
<dbReference type="OrthoDB" id="9795612at2"/>
<dbReference type="PhylomeDB" id="Q00514"/>
<dbReference type="EvolutionaryTrace" id="Q00514"/>
<dbReference type="Proteomes" id="UP000002438">
    <property type="component" value="Chromosome"/>
</dbReference>
<dbReference type="GO" id="GO:0005886">
    <property type="term" value="C:plasma membrane"/>
    <property type="evidence" value="ECO:0007669"/>
    <property type="project" value="UniProtKB-SubCell"/>
</dbReference>
<dbReference type="GO" id="GO:0015627">
    <property type="term" value="C:type II protein secretion system complex"/>
    <property type="evidence" value="ECO:0000314"/>
    <property type="project" value="PseudoCAP"/>
</dbReference>
<dbReference type="GO" id="GO:0015628">
    <property type="term" value="P:protein secretion by the type II secretion system"/>
    <property type="evidence" value="ECO:0000314"/>
    <property type="project" value="PseudoCAP"/>
</dbReference>
<dbReference type="FunFam" id="3.30.700.10:FF:000001">
    <property type="entry name" value="General secretion pathway protein G"/>
    <property type="match status" value="1"/>
</dbReference>
<dbReference type="Gene3D" id="3.30.700.10">
    <property type="entry name" value="Glycoprotein, Type 4 Pilin"/>
    <property type="match status" value="1"/>
</dbReference>
<dbReference type="InterPro" id="IPR000983">
    <property type="entry name" value="Bac_GSPG_pilin"/>
</dbReference>
<dbReference type="InterPro" id="IPR012902">
    <property type="entry name" value="N_methyl_site"/>
</dbReference>
<dbReference type="InterPro" id="IPR045584">
    <property type="entry name" value="Pilin-like"/>
</dbReference>
<dbReference type="InterPro" id="IPR013545">
    <property type="entry name" value="T2SS_protein-GspG_C"/>
</dbReference>
<dbReference type="InterPro" id="IPR050470">
    <property type="entry name" value="T4P/T2SS_Core"/>
</dbReference>
<dbReference type="InterPro" id="IPR010054">
    <property type="entry name" value="Type2_sec_GspG"/>
</dbReference>
<dbReference type="NCBIfam" id="TIGR02532">
    <property type="entry name" value="IV_pilin_GFxxxE"/>
    <property type="match status" value="1"/>
</dbReference>
<dbReference type="NCBIfam" id="TIGR01710">
    <property type="entry name" value="typeII_sec_gspG"/>
    <property type="match status" value="1"/>
</dbReference>
<dbReference type="PANTHER" id="PTHR30093">
    <property type="entry name" value="GENERAL SECRETION PATHWAY PROTEIN G"/>
    <property type="match status" value="1"/>
</dbReference>
<dbReference type="PANTHER" id="PTHR30093:SF44">
    <property type="entry name" value="TYPE II SECRETION SYSTEM CORE PROTEIN G"/>
    <property type="match status" value="1"/>
</dbReference>
<dbReference type="Pfam" id="PF07963">
    <property type="entry name" value="N_methyl"/>
    <property type="match status" value="1"/>
</dbReference>
<dbReference type="Pfam" id="PF08334">
    <property type="entry name" value="T2SSG"/>
    <property type="match status" value="1"/>
</dbReference>
<dbReference type="PRINTS" id="PR00813">
    <property type="entry name" value="BCTERIALGSPG"/>
</dbReference>
<dbReference type="SUPFAM" id="SSF54523">
    <property type="entry name" value="Pili subunits"/>
    <property type="match status" value="1"/>
</dbReference>
<dbReference type="PROSITE" id="PS00409">
    <property type="entry name" value="PROKAR_NTER_METHYL"/>
    <property type="match status" value="1"/>
</dbReference>
<name>GSPG_PSEAE</name>
<keyword id="KW-0002">3D-structure</keyword>
<keyword id="KW-0997">Cell inner membrane</keyword>
<keyword id="KW-1003">Cell membrane</keyword>
<keyword id="KW-0472">Membrane</keyword>
<keyword id="KW-0488">Methylation</keyword>
<keyword id="KW-0653">Protein transport</keyword>
<keyword id="KW-1185">Reference proteome</keyword>
<keyword id="KW-0812">Transmembrane</keyword>
<keyword id="KW-1133">Transmembrane helix</keyword>
<keyword id="KW-0813">Transport</keyword>
<evidence type="ECO:0000255" key="1"/>
<evidence type="ECO:0000255" key="2">
    <source>
        <dbReference type="PROSITE-ProRule" id="PRU01070"/>
    </source>
</evidence>
<evidence type="ECO:0000256" key="3">
    <source>
        <dbReference type="SAM" id="MobiDB-lite"/>
    </source>
</evidence>
<evidence type="ECO:0000269" key="4">
    <source>
    </source>
</evidence>
<evidence type="ECO:0000269" key="5">
    <source>
    </source>
</evidence>
<evidence type="ECO:0000269" key="6">
    <source>
    </source>
</evidence>
<evidence type="ECO:0000269" key="7">
    <source>
    </source>
</evidence>
<evidence type="ECO:0000269" key="8">
    <source>
    </source>
</evidence>
<evidence type="ECO:0000303" key="9">
    <source>
    </source>
</evidence>
<evidence type="ECO:0000305" key="10"/>
<evidence type="ECO:0007829" key="11">
    <source>
        <dbReference type="PDB" id="2KEP"/>
    </source>
</evidence>
<feature type="propeptide" id="PRO_0000024208" description="Leader sequence" evidence="2 7">
    <location>
        <begin position="1"/>
        <end position="8"/>
    </location>
</feature>
<feature type="chain" id="PRO_0000024209" description="Type II secretion system core protein G">
    <location>
        <begin position="9"/>
        <end position="142"/>
    </location>
</feature>
<feature type="transmembrane region" description="Helical" evidence="1">
    <location>
        <begin position="9"/>
        <end position="29"/>
    </location>
</feature>
<feature type="region of interest" description="Disordered" evidence="3">
    <location>
        <begin position="121"/>
        <end position="142"/>
    </location>
</feature>
<feature type="modified residue" description="N-methylphenylalanine" evidence="2 7">
    <location>
        <position position="9"/>
    </location>
</feature>
<feature type="sequence conflict" description="In Ref. 2; AAA25946." evidence="10" ref="2">
    <original>S</original>
    <variation>T</variation>
    <location>
        <position position="131"/>
    </location>
</feature>
<feature type="helix" evidence="11">
    <location>
        <begin position="38"/>
        <end position="61"/>
    </location>
</feature>
<feature type="helix" evidence="11">
    <location>
        <begin position="70"/>
        <end position="76"/>
    </location>
</feature>
<feature type="turn" evidence="11">
    <location>
        <begin position="91"/>
        <end position="93"/>
    </location>
</feature>
<feature type="strand" evidence="11">
    <location>
        <begin position="107"/>
        <end position="109"/>
    </location>
</feature>
<feature type="strand" evidence="11">
    <location>
        <begin position="113"/>
        <end position="116"/>
    </location>
</feature>
<feature type="strand" evidence="11">
    <location>
        <begin position="118"/>
        <end position="121"/>
    </location>
</feature>
<feature type="strand" evidence="11">
    <location>
        <begin position="130"/>
        <end position="135"/>
    </location>
</feature>
<feature type="strand" evidence="11">
    <location>
        <begin position="137"/>
        <end position="139"/>
    </location>
</feature>
<comment type="function">
    <text evidence="4 5 8">Core component of the type II secretion system required for the energy-dependent secretion of extracellular factors such as proteases and toxins from the periplasm (PubMed:9282737). Pseudopilin (pilin-like) protein that polymerizes to form the pseudopilus. Further polymerization triggers pseudopilus growth (PubMed:16012171). Type II pseudopilus confers increased bacterial adhesive capabilities (PubMed:12700254).</text>
</comment>
<comment type="subunit">
    <text evidence="5 8">Type II secretion system is composed of four main components: the outer membrane complex, the inner membrane complex, the cytoplasmic secretion ATPase and the periplasm-spanning pseudopilus. Forms homomultimers (PubMed:16012171). Interacts with pseudopilin tip ternary complex made of XcpX, XcpU, XcpV and XcpW (PubMed:16012171). Interacts with PilA (PubMed:9282737).</text>
</comment>
<comment type="subcellular location">
    <subcellularLocation>
        <location evidence="6 7">Cell inner membrane</location>
        <topology evidence="1">Single-pass membrane protein</topology>
    </subcellularLocation>
    <text evidence="6">Translocation to the cell inner membrane is independent of the presence of other Xcp components but depends on a functional Sec apparatus.</text>
</comment>
<comment type="PTM">
    <text evidence="7">Cleaved by the prepilin peptidase.</text>
</comment>
<comment type="PTM">
    <text evidence="7">Methylated by prepilin peptidase at the amino group of the N-terminal phenylalanine once the leader sequence is cleaved.</text>
</comment>
<comment type="similarity">
    <text evidence="10">Belongs to the GSP G family.</text>
</comment>
<comment type="sequence caution" evidence="10">
    <conflict type="erroneous initiation">
        <sequence resource="EMBL-CDS" id="AAG06489"/>
    </conflict>
    <text>Truncated N-terminus.</text>
</comment>
<protein>
    <recommendedName>
        <fullName evidence="9">Type II secretion system core protein G</fullName>
        <shortName>T2SS core protein G</shortName>
    </recommendedName>
    <alternativeName>
        <fullName>General secretion pathway protein G</fullName>
    </alternativeName>
    <alternativeName>
        <fullName>PilD-dependent protein PddA</fullName>
    </alternativeName>
</protein>
<reference key="1">
    <citation type="journal article" date="1992" name="Mol. Microbiol.">
        <title>Protein secretion in Pseudomonas aeruginosa: characterization of seven xcp genes and processing of secretory apparatus components by prepilin peptidase.</title>
        <authorList>
            <person name="Bally M."/>
            <person name="Filloux A."/>
            <person name="Akrim M."/>
            <person name="Ball G."/>
            <person name="Lazdunski A."/>
            <person name="Tommassen J."/>
        </authorList>
    </citation>
    <scope>NUCLEOTIDE SEQUENCE [GENOMIC DNA]</scope>
    <source>
        <strain>ATCC 15692 / DSM 22644 / CIP 104116 / JCM 14847 / LMG 12228 / 1C / PRS 101 / PAO1</strain>
    </source>
</reference>
<reference key="2">
    <citation type="journal article" date="1992" name="Proc. Natl. Acad. Sci. U.S.A.">
        <title>Components of the protein-excretion apparatus of Pseudomonas aeruginosa are processed by the type IV prepilin peptidase.</title>
        <authorList>
            <person name="Nunn D.N."/>
            <person name="Lory S."/>
        </authorList>
    </citation>
    <scope>NUCLEOTIDE SEQUENCE [GENOMIC DNA]</scope>
</reference>
<reference key="3">
    <citation type="journal article" date="2000" name="Nature">
        <title>Complete genome sequence of Pseudomonas aeruginosa PAO1, an opportunistic pathogen.</title>
        <authorList>
            <person name="Stover C.K."/>
            <person name="Pham X.-Q.T."/>
            <person name="Erwin A.L."/>
            <person name="Mizoguchi S.D."/>
            <person name="Warrener P."/>
            <person name="Hickey M.J."/>
            <person name="Brinkman F.S.L."/>
            <person name="Hufnagle W.O."/>
            <person name="Kowalik D.J."/>
            <person name="Lagrou M."/>
            <person name="Garber R.L."/>
            <person name="Goltry L."/>
            <person name="Tolentino E."/>
            <person name="Westbrock-Wadman S."/>
            <person name="Yuan Y."/>
            <person name="Brody L.L."/>
            <person name="Coulter S.N."/>
            <person name="Folger K.R."/>
            <person name="Kas A."/>
            <person name="Larbig K."/>
            <person name="Lim R.M."/>
            <person name="Smith K.A."/>
            <person name="Spencer D.H."/>
            <person name="Wong G.K.-S."/>
            <person name="Wu Z."/>
            <person name="Paulsen I.T."/>
            <person name="Reizer J."/>
            <person name="Saier M.H. Jr."/>
            <person name="Hancock R.E.W."/>
            <person name="Lory S."/>
            <person name="Olson M.V."/>
        </authorList>
    </citation>
    <scope>NUCLEOTIDE SEQUENCE [LARGE SCALE GENOMIC DNA]</scope>
    <source>
        <strain>ATCC 15692 / DSM 22644 / CIP 104116 / JCM 14847 / LMG 12228 / 1C / PRS 101 / PAO1</strain>
    </source>
</reference>
<reference key="4">
    <citation type="journal article" date="1993" name="J. Bacteriol.">
        <title>Cleavage, methylation, and localization of the Pseudomonas aeruginosa export proteins XcpT, -U, -V, and -W.</title>
        <authorList>
            <person name="Nunn D.N."/>
            <person name="Lory S."/>
        </authorList>
    </citation>
    <scope>SUBCELLULAR LOCATION</scope>
    <scope>CLEAVAGE</scope>
    <scope>METHYLATION AT PHE-9</scope>
    <source>
        <strain>PAK</strain>
    </source>
</reference>
<reference key="5">
    <citation type="journal article" date="1997" name="Mol. Microbiol.">
        <title>Interactions of the components of the general secretion pathway: role of Pseudomonas aeruginosa type IV pilin subunits in complex formation and extracellular protein secretion.</title>
        <authorList>
            <person name="Lu H.M."/>
            <person name="Motley S.T."/>
            <person name="Lory S."/>
        </authorList>
    </citation>
    <scope>FUNCTION</scope>
    <scope>SUBUNIT</scope>
    <scope>INTERACTION WITH PILA; XCPU; XCPV AND XCPW</scope>
</reference>
<reference key="6">
    <citation type="journal article" date="2003" name="J. Bacteriol.">
        <title>Type II protein secretion in Pseudomonas aeruginosa: the pseudopilus is a multifibrillar and adhesive structure.</title>
        <authorList>
            <person name="Durand E."/>
            <person name="Bernadac A."/>
            <person name="Ball G."/>
            <person name="Lazdunski A."/>
            <person name="Sturgis J.N."/>
            <person name="Filloux A."/>
        </authorList>
    </citation>
    <scope>FUNCTION</scope>
    <source>
        <strain>ATCC 15692 / DSM 22644 / CIP 104116 / JCM 14847 / LMG 12228 / 1C / PRS 101 / PAO1</strain>
    </source>
</reference>
<reference key="7">
    <citation type="journal article" date="2005" name="J. Biol. Chem.">
        <title>XcpX controls biogenesis of the Pseudomonas aeruginosa XcpT-containing pseudopilus.</title>
        <authorList>
            <person name="Durand E."/>
            <person name="Michel G."/>
            <person name="Voulhoux R."/>
            <person name="Kuerner J."/>
            <person name="Bernadac A."/>
            <person name="Filloux A."/>
        </authorList>
    </citation>
    <scope>FUNCTION</scope>
    <scope>INTERACTION WITH XCPX</scope>
</reference>
<reference key="8">
    <citation type="journal article" date="2007" name="J. Bacteriol.">
        <title>Export of the pseudopilin XcpT of the Pseudomonas aeruginosa type II secretion system via the signal recognition particle-Sec pathway.</title>
        <authorList>
            <person name="Arts J."/>
            <person name="van Boxtel R."/>
            <person name="Filloux A."/>
            <person name="Tommassen J."/>
            <person name="Koster M."/>
        </authorList>
    </citation>
    <scope>SUBCELLULAR LOCATION</scope>
</reference>
<reference key="9">
    <citation type="journal article" date="2010" name="J. Struct. Biol.">
        <title>Structure of the Pseudomonas aeruginosa XcpT pseudopilin, a major component of the type II secretion system.</title>
        <authorList>
            <person name="Alphonse S."/>
            <person name="Durand E."/>
            <person name="Douzi B."/>
            <person name="Waegele B."/>
            <person name="Darbon H."/>
            <person name="Filloux A."/>
            <person name="Voulhoux R."/>
            <person name="Bernard C."/>
        </authorList>
    </citation>
    <scope>STRUCTURE BY NMR OF 33-142</scope>
</reference>
<organism>
    <name type="scientific">Pseudomonas aeruginosa (strain ATCC 15692 / DSM 22644 / CIP 104116 / JCM 14847 / LMG 12228 / 1C / PRS 101 / PAO1)</name>
    <dbReference type="NCBI Taxonomy" id="208964"/>
    <lineage>
        <taxon>Bacteria</taxon>
        <taxon>Pseudomonadati</taxon>
        <taxon>Pseudomonadota</taxon>
        <taxon>Gammaproteobacteria</taxon>
        <taxon>Pseudomonadales</taxon>
        <taxon>Pseudomonadaceae</taxon>
        <taxon>Pseudomonas</taxon>
    </lineage>
</organism>
<proteinExistence type="evidence at protein level"/>
<accession>Q00514</accession>
<sequence length="142" mass="15449">MQRRQQSGFTLIEIMVVVVILGILAALVVPQVMSRPDQAKVTVAKGDIKAIAAALDMYKLDNFAYPSTQQGLEALVKKPTGNPQPKNWNKDGYLKKLPVDPWGNPYQYLAPGTKGPFDLYSLGADGKEGGSDNDADIGNWDN</sequence>
<gene>
    <name type="primary">xcpT</name>
    <name type="synonym">pddA</name>
    <name type="ordered locus">PA3101</name>
</gene>